<protein>
    <recommendedName>
        <fullName evidence="1">Glutamate N-acetyltransferase</fullName>
        <ecNumber evidence="1 2">2.3.1.35</ecNumber>
    </recommendedName>
    <alternativeName>
        <fullName evidence="1">Ornithine acetyltransferase</fullName>
        <shortName evidence="1 3">OATase</shortName>
    </alternativeName>
    <alternativeName>
        <fullName evidence="1">Ornithine transacetylase</fullName>
    </alternativeName>
    <component>
        <recommendedName>
            <fullName evidence="1">Glutamate N-acetyltransferase alpha chain</fullName>
        </recommendedName>
    </component>
    <component>
        <recommendedName>
            <fullName evidence="1">Glutamate N-acetyltransferase beta chain</fullName>
        </recommendedName>
    </component>
</protein>
<proteinExistence type="evidence at protein level"/>
<feature type="chain" id="PRO_0000002273" description="Glutamate N-acetyltransferase alpha chain" evidence="1">
    <location>
        <begin position="1"/>
        <end position="184"/>
    </location>
</feature>
<feature type="chain" id="PRO_0000002274" description="Glutamate N-acetyltransferase beta chain" evidence="1">
    <location>
        <begin position="185"/>
        <end position="402"/>
    </location>
</feature>
<feature type="active site" description="Nucleophile" evidence="1">
    <location>
        <position position="185"/>
    </location>
</feature>
<feature type="binding site" evidence="1">
    <location>
        <position position="146"/>
    </location>
    <ligand>
        <name>substrate</name>
    </ligand>
</feature>
<feature type="binding site" evidence="1">
    <location>
        <position position="172"/>
    </location>
    <ligand>
        <name>substrate</name>
    </ligand>
</feature>
<feature type="binding site" evidence="1">
    <location>
        <position position="185"/>
    </location>
    <ligand>
        <name>substrate</name>
    </ligand>
</feature>
<feature type="binding site" evidence="1">
    <location>
        <position position="267"/>
    </location>
    <ligand>
        <name>substrate</name>
    </ligand>
</feature>
<feature type="binding site" evidence="1">
    <location>
        <position position="397"/>
    </location>
    <ligand>
        <name>substrate</name>
    </ligand>
</feature>
<feature type="binding site" evidence="1">
    <location>
        <position position="402"/>
    </location>
    <ligand>
        <name>substrate</name>
    </ligand>
</feature>
<feature type="site" description="Involved in the stabilization of negative charge on the oxyanion by the formation of the oxyanion hole" evidence="1">
    <location>
        <position position="108"/>
    </location>
</feature>
<feature type="site" description="Involved in the stabilization of negative charge on the oxyanion by the formation of the oxyanion hole" evidence="1">
    <location>
        <position position="109"/>
    </location>
</feature>
<feature type="site" description="Cleavage; by autolysis" evidence="1">
    <location>
        <begin position="184"/>
        <end position="185"/>
    </location>
</feature>
<accession>Q57645</accession>
<evidence type="ECO:0000255" key="1">
    <source>
        <dbReference type="HAMAP-Rule" id="MF_01106"/>
    </source>
</evidence>
<evidence type="ECO:0000269" key="2">
    <source>
    </source>
</evidence>
<evidence type="ECO:0000303" key="3">
    <source>
    </source>
</evidence>
<evidence type="ECO:0000305" key="4"/>
<gene>
    <name evidence="1" type="primary">argJ</name>
    <name type="ordered locus">MJ0186</name>
</gene>
<name>ARGJ_METJA</name>
<reference key="1">
    <citation type="journal article" date="1996" name="Science">
        <title>Complete genome sequence of the methanogenic archaeon, Methanococcus jannaschii.</title>
        <authorList>
            <person name="Bult C.J."/>
            <person name="White O."/>
            <person name="Olsen G.J."/>
            <person name="Zhou L."/>
            <person name="Fleischmann R.D."/>
            <person name="Sutton G.G."/>
            <person name="Blake J.A."/>
            <person name="FitzGerald L.M."/>
            <person name="Clayton R.A."/>
            <person name="Gocayne J.D."/>
            <person name="Kerlavage A.R."/>
            <person name="Dougherty B.A."/>
            <person name="Tomb J.-F."/>
            <person name="Adams M.D."/>
            <person name="Reich C.I."/>
            <person name="Overbeek R."/>
            <person name="Kirkness E.F."/>
            <person name="Weinstock K.G."/>
            <person name="Merrick J.M."/>
            <person name="Glodek A."/>
            <person name="Scott J.L."/>
            <person name="Geoghagen N.S.M."/>
            <person name="Weidman J.F."/>
            <person name="Fuhrmann J.L."/>
            <person name="Nguyen D."/>
            <person name="Utterback T.R."/>
            <person name="Kelley J.M."/>
            <person name="Peterson J.D."/>
            <person name="Sadow P.W."/>
            <person name="Hanna M.C."/>
            <person name="Cotton M.D."/>
            <person name="Roberts K.M."/>
            <person name="Hurst M.A."/>
            <person name="Kaine B.P."/>
            <person name="Borodovsky M."/>
            <person name="Klenk H.-P."/>
            <person name="Fraser C.M."/>
            <person name="Smith H.O."/>
            <person name="Woese C.R."/>
            <person name="Venter J.C."/>
        </authorList>
    </citation>
    <scope>NUCLEOTIDE SEQUENCE [LARGE SCALE GENOMIC DNA]</scope>
    <source>
        <strain>ATCC 43067 / DSM 2661 / JAL-1 / JCM 10045 / NBRC 100440</strain>
    </source>
</reference>
<reference key="2">
    <citation type="journal article" date="2000" name="Eur. J. Biochem.">
        <title>Characterization and kinetic mechanism of mono- and bifunctional ornithine acetyltransferases from thermophilic microorganisms.</title>
        <authorList>
            <person name="Marc F."/>
            <person name="Weigel P."/>
            <person name="Legrain C."/>
            <person name="Almeras Y."/>
            <person name="Santrot M."/>
            <person name="Glansdorff N."/>
            <person name="Sakanyan V."/>
        </authorList>
    </citation>
    <scope>PROTEIN SEQUENCE OF 185-192</scope>
    <scope>FUNCTION AS AN OATASE</scope>
    <scope>BIOPHYSICOCHEMICAL PROPERTIES</scope>
    <scope>CATALYTIC ACTIVITY</scope>
    <scope>ACTIVITY REGULATION</scope>
    <scope>REACTION MECHANISM</scope>
    <scope>SUBUNIT</scope>
    <source>
        <strain>NCIMB 8224 / CCM 2186 / VKM B-718</strain>
    </source>
</reference>
<sequence length="402" mass="43757">MRVIDGGVTAPKGFKANGYKEGKFGVAIIISEKDAVGAGTFTTNKVVAHPVVLSRELIKNRDKFRAIVANSGNANCFTKDGMEDAKEMQRLVAELFNINEDEVLVASTGVIGRKMDMNIIKDRINKVYNLIKEGNSSINAAKAIMTTDTKPKEIAVEFEVNGKTVRVGGIAKGAGMIAPNMLHATMLCFITTDIEIDKESLTNILQKVVDKTFNNISVDGDTSTNDTVFVLANGLSGVNYEECGEEFENALLYVCRELAKMIVKDGEGATKFMEVVVKGAKTEEDAVKASKAIVNSLLVKTAVFGGDPNWGRIVAAVGYSGADFNPEVVDVILSNYKDEVYLVKDGIPLADEGTEELKKAEEIMKSDEIKIVVDLKMGEFENVCYGCDLSYEYVRINAEYTT</sequence>
<comment type="function">
    <text evidence="1 2">Catalyzes the transfer of the acetyl group from N(2)-acetylornithine to glutamate, forming N-acetylglutamate and L-ornithine.</text>
</comment>
<comment type="catalytic activity">
    <reaction evidence="1 2">
        <text>N(2)-acetyl-L-ornithine + L-glutamate = N-acetyl-L-glutamate + L-ornithine</text>
        <dbReference type="Rhea" id="RHEA:15349"/>
        <dbReference type="ChEBI" id="CHEBI:29985"/>
        <dbReference type="ChEBI" id="CHEBI:44337"/>
        <dbReference type="ChEBI" id="CHEBI:46911"/>
        <dbReference type="ChEBI" id="CHEBI:57805"/>
        <dbReference type="EC" id="2.3.1.35"/>
    </reaction>
</comment>
<comment type="activity regulation">
    <text evidence="2">Competitively inhibited by L-ornithine.</text>
</comment>
<comment type="biophysicochemical properties">
    <kinetics>
        <KM evidence="2">9.6 mM for N-acetyl-L-ornithine</KM>
        <KM evidence="2">11.3 mM for L-glutamate</KM>
        <Vmax evidence="2">175.0 mmol/min/mg enzyme</Vmax>
    </kinetics>
    <phDependence>
        <text evidence="2">Optimum pH is 8.</text>
    </phDependence>
    <temperatureDependence>
        <text evidence="2">Optimum temperature is above 95 degrees Celsius.</text>
    </temperatureDependence>
</comment>
<comment type="pathway">
    <text evidence="1">Amino-acid biosynthesis; L-arginine biosynthesis; L-ornithine and N-acetyl-L-glutamate from L-glutamate and N(2)-acetyl-L-ornithine (cyclic): step 1/1.</text>
</comment>
<comment type="subunit">
    <text evidence="1 2">Heterotetramer of two alpha and two beta chains.</text>
</comment>
<comment type="subcellular location">
    <subcellularLocation>
        <location evidence="1 4">Cytoplasm</location>
    </subcellularLocation>
</comment>
<comment type="similarity">
    <text evidence="1 4">Belongs to the ArgJ family.</text>
</comment>
<organism>
    <name type="scientific">Methanocaldococcus jannaschii (strain ATCC 43067 / DSM 2661 / JAL-1 / JCM 10045 / NBRC 100440)</name>
    <name type="common">Methanococcus jannaschii</name>
    <dbReference type="NCBI Taxonomy" id="243232"/>
    <lineage>
        <taxon>Archaea</taxon>
        <taxon>Methanobacteriati</taxon>
        <taxon>Methanobacteriota</taxon>
        <taxon>Methanomada group</taxon>
        <taxon>Methanococci</taxon>
        <taxon>Methanococcales</taxon>
        <taxon>Methanocaldococcaceae</taxon>
        <taxon>Methanocaldococcus</taxon>
    </lineage>
</organism>
<keyword id="KW-0012">Acyltransferase</keyword>
<keyword id="KW-0028">Amino-acid biosynthesis</keyword>
<keyword id="KW-0055">Arginine biosynthesis</keyword>
<keyword id="KW-0068">Autocatalytic cleavage</keyword>
<keyword id="KW-0963">Cytoplasm</keyword>
<keyword id="KW-0903">Direct protein sequencing</keyword>
<keyword id="KW-1185">Reference proteome</keyword>
<keyword id="KW-0808">Transferase</keyword>
<dbReference type="EC" id="2.3.1.35" evidence="1 2"/>
<dbReference type="EMBL" id="L77117">
    <property type="protein sequence ID" value="AAB98166.1"/>
    <property type="molecule type" value="Genomic_DNA"/>
</dbReference>
<dbReference type="PIR" id="C64323">
    <property type="entry name" value="C64323"/>
</dbReference>
<dbReference type="RefSeq" id="WP_010869681.1">
    <property type="nucleotide sequence ID" value="NC_000909.1"/>
</dbReference>
<dbReference type="SMR" id="Q57645"/>
<dbReference type="FunCoup" id="Q57645">
    <property type="interactions" value="200"/>
</dbReference>
<dbReference type="STRING" id="243232.MJ_0186"/>
<dbReference type="MEROPS" id="T05.002"/>
<dbReference type="PaxDb" id="243232-MJ_0186"/>
<dbReference type="DNASU" id="1451033"/>
<dbReference type="EnsemblBacteria" id="AAB98166">
    <property type="protein sequence ID" value="AAB98166"/>
    <property type="gene ID" value="MJ_0186"/>
</dbReference>
<dbReference type="GeneID" id="1451033"/>
<dbReference type="KEGG" id="mja:MJ_0186"/>
<dbReference type="eggNOG" id="arCOG04413">
    <property type="taxonomic scope" value="Archaea"/>
</dbReference>
<dbReference type="HOGENOM" id="CLU_027172_1_0_2"/>
<dbReference type="InParanoid" id="Q57645"/>
<dbReference type="OrthoDB" id="52592at2157"/>
<dbReference type="PhylomeDB" id="Q57645"/>
<dbReference type="SABIO-RK" id="Q57645"/>
<dbReference type="UniPathway" id="UPA00068">
    <property type="reaction ID" value="UER00111"/>
</dbReference>
<dbReference type="Proteomes" id="UP000000805">
    <property type="component" value="Chromosome"/>
</dbReference>
<dbReference type="GO" id="GO:0005737">
    <property type="term" value="C:cytoplasm"/>
    <property type="evidence" value="ECO:0007669"/>
    <property type="project" value="UniProtKB-SubCell"/>
</dbReference>
<dbReference type="GO" id="GO:0004358">
    <property type="term" value="F:glutamate N-acetyltransferase activity"/>
    <property type="evidence" value="ECO:0007669"/>
    <property type="project" value="UniProtKB-UniRule"/>
</dbReference>
<dbReference type="GO" id="GO:0004042">
    <property type="term" value="F:L-glutamate N-acetyltransferase activity"/>
    <property type="evidence" value="ECO:0000318"/>
    <property type="project" value="GO_Central"/>
</dbReference>
<dbReference type="GO" id="GO:0006526">
    <property type="term" value="P:L-arginine biosynthetic process"/>
    <property type="evidence" value="ECO:0007669"/>
    <property type="project" value="UniProtKB-UniRule"/>
</dbReference>
<dbReference type="GO" id="GO:0006592">
    <property type="term" value="P:ornithine biosynthetic process"/>
    <property type="evidence" value="ECO:0000318"/>
    <property type="project" value="GO_Central"/>
</dbReference>
<dbReference type="CDD" id="cd02152">
    <property type="entry name" value="OAT"/>
    <property type="match status" value="1"/>
</dbReference>
<dbReference type="FunFam" id="3.10.20.340:FF:000001">
    <property type="entry name" value="Arginine biosynthesis bifunctional protein ArgJ, chloroplastic"/>
    <property type="match status" value="1"/>
</dbReference>
<dbReference type="FunFam" id="3.60.70.12:FF:000001">
    <property type="entry name" value="Arginine biosynthesis bifunctional protein ArgJ, chloroplastic"/>
    <property type="match status" value="1"/>
</dbReference>
<dbReference type="Gene3D" id="3.30.2330.10">
    <property type="entry name" value="arginine biosynthesis bifunctional protein suprefamily"/>
    <property type="match status" value="1"/>
</dbReference>
<dbReference type="Gene3D" id="3.10.20.340">
    <property type="entry name" value="ArgJ beta chain, C-terminal domain"/>
    <property type="match status" value="1"/>
</dbReference>
<dbReference type="Gene3D" id="3.60.70.12">
    <property type="entry name" value="L-amino peptidase D-ALA esterase/amidase"/>
    <property type="match status" value="1"/>
</dbReference>
<dbReference type="HAMAP" id="MF_01106">
    <property type="entry name" value="ArgJ"/>
    <property type="match status" value="1"/>
</dbReference>
<dbReference type="InterPro" id="IPR002813">
    <property type="entry name" value="Arg_biosynth_ArgJ"/>
</dbReference>
<dbReference type="InterPro" id="IPR016117">
    <property type="entry name" value="ArgJ-like_dom_sf"/>
</dbReference>
<dbReference type="InterPro" id="IPR042195">
    <property type="entry name" value="ArgJ_beta_C"/>
</dbReference>
<dbReference type="NCBIfam" id="TIGR00120">
    <property type="entry name" value="ArgJ"/>
    <property type="match status" value="1"/>
</dbReference>
<dbReference type="NCBIfam" id="NF003802">
    <property type="entry name" value="PRK05388.1"/>
    <property type="match status" value="1"/>
</dbReference>
<dbReference type="PANTHER" id="PTHR23100">
    <property type="entry name" value="ARGININE BIOSYNTHESIS BIFUNCTIONAL PROTEIN ARGJ"/>
    <property type="match status" value="1"/>
</dbReference>
<dbReference type="PANTHER" id="PTHR23100:SF0">
    <property type="entry name" value="ARGININE BIOSYNTHESIS BIFUNCTIONAL PROTEIN ARGJ, MITOCHONDRIAL"/>
    <property type="match status" value="1"/>
</dbReference>
<dbReference type="Pfam" id="PF01960">
    <property type="entry name" value="ArgJ"/>
    <property type="match status" value="1"/>
</dbReference>
<dbReference type="SUPFAM" id="SSF56266">
    <property type="entry name" value="DmpA/ArgJ-like"/>
    <property type="match status" value="1"/>
</dbReference>